<proteinExistence type="inferred from homology"/>
<sequence>MSLYRDEGIVLRTQDLGEADRIVTLLTRRTGLVRAVGKGVRRTRSRFGARLEPFTHIDVQLHAGKSLDVVTQVDTLHAYGSVLVTDYPRYTAGVAMLETAEKVVSVEKDPALRQFLLLWGGLRTLAEGAHDPRLVLDAYLLRSLAVAGYAPALEECAHCGVPGPHREFAVHAGGMVCSLCRPAGSVKPSPAAVALMVALLRGDWESADASAERDRTECSGLVAAYLQWHLENGVRSLRLVERA</sequence>
<reference key="1">
    <citation type="journal article" date="2007" name="J. Bacteriol.">
        <title>Genome sequence and analysis of the soil cellulolytic actinomycete Thermobifida fusca YX.</title>
        <authorList>
            <person name="Lykidis A."/>
            <person name="Mavromatis K."/>
            <person name="Ivanova N."/>
            <person name="Anderson I."/>
            <person name="Land M."/>
            <person name="DiBartolo G."/>
            <person name="Martinez M."/>
            <person name="Lapidus A."/>
            <person name="Lucas S."/>
            <person name="Copeland A."/>
            <person name="Richardson P."/>
            <person name="Wilson D.B."/>
            <person name="Kyrpides N."/>
        </authorList>
    </citation>
    <scope>NUCLEOTIDE SEQUENCE [LARGE SCALE GENOMIC DNA]</scope>
    <source>
        <strain>YX</strain>
    </source>
</reference>
<feature type="chain" id="PRO_0000227059" description="DNA repair protein RecO">
    <location>
        <begin position="1"/>
        <end position="243"/>
    </location>
</feature>
<organism>
    <name type="scientific">Thermobifida fusca (strain YX)</name>
    <dbReference type="NCBI Taxonomy" id="269800"/>
    <lineage>
        <taxon>Bacteria</taxon>
        <taxon>Bacillati</taxon>
        <taxon>Actinomycetota</taxon>
        <taxon>Actinomycetes</taxon>
        <taxon>Streptosporangiales</taxon>
        <taxon>Nocardiopsidaceae</taxon>
        <taxon>Thermobifida</taxon>
    </lineage>
</organism>
<name>RECO_THEFY</name>
<gene>
    <name evidence="1" type="primary">recO</name>
    <name type="ordered locus">Tfu_0852</name>
</gene>
<keyword id="KW-0227">DNA damage</keyword>
<keyword id="KW-0233">DNA recombination</keyword>
<keyword id="KW-0234">DNA repair</keyword>
<accession>Q47RM7</accession>
<evidence type="ECO:0000255" key="1">
    <source>
        <dbReference type="HAMAP-Rule" id="MF_00201"/>
    </source>
</evidence>
<protein>
    <recommendedName>
        <fullName evidence="1">DNA repair protein RecO</fullName>
    </recommendedName>
    <alternativeName>
        <fullName evidence="1">Recombination protein O</fullName>
    </alternativeName>
</protein>
<comment type="function">
    <text evidence="1">Involved in DNA repair and RecF pathway recombination.</text>
</comment>
<comment type="similarity">
    <text evidence="1">Belongs to the RecO family.</text>
</comment>
<dbReference type="EMBL" id="CP000088">
    <property type="protein sequence ID" value="AAZ54890.1"/>
    <property type="molecule type" value="Genomic_DNA"/>
</dbReference>
<dbReference type="RefSeq" id="WP_011291299.1">
    <property type="nucleotide sequence ID" value="NC_007333.1"/>
</dbReference>
<dbReference type="SMR" id="Q47RM7"/>
<dbReference type="STRING" id="269800.Tfu_0852"/>
<dbReference type="KEGG" id="tfu:Tfu_0852"/>
<dbReference type="eggNOG" id="COG1381">
    <property type="taxonomic scope" value="Bacteria"/>
</dbReference>
<dbReference type="HOGENOM" id="CLU_066632_1_1_11"/>
<dbReference type="OrthoDB" id="9812244at2"/>
<dbReference type="GO" id="GO:0043590">
    <property type="term" value="C:bacterial nucleoid"/>
    <property type="evidence" value="ECO:0007669"/>
    <property type="project" value="TreeGrafter"/>
</dbReference>
<dbReference type="GO" id="GO:0006310">
    <property type="term" value="P:DNA recombination"/>
    <property type="evidence" value="ECO:0007669"/>
    <property type="project" value="UniProtKB-UniRule"/>
</dbReference>
<dbReference type="GO" id="GO:0006302">
    <property type="term" value="P:double-strand break repair"/>
    <property type="evidence" value="ECO:0007669"/>
    <property type="project" value="TreeGrafter"/>
</dbReference>
<dbReference type="Gene3D" id="2.40.50.140">
    <property type="entry name" value="Nucleic acid-binding proteins"/>
    <property type="match status" value="1"/>
</dbReference>
<dbReference type="Gene3D" id="1.20.1440.120">
    <property type="entry name" value="Recombination protein O, C-terminal domain"/>
    <property type="match status" value="1"/>
</dbReference>
<dbReference type="Gene3D" id="6.20.220.20">
    <property type="entry name" value="Recombination protein O, zinc-binding domain"/>
    <property type="match status" value="1"/>
</dbReference>
<dbReference type="HAMAP" id="MF_00201">
    <property type="entry name" value="RecO"/>
    <property type="match status" value="1"/>
</dbReference>
<dbReference type="InterPro" id="IPR037278">
    <property type="entry name" value="ARFGAP/RecO"/>
</dbReference>
<dbReference type="InterPro" id="IPR022572">
    <property type="entry name" value="DNA_rep/recomb_RecO_N"/>
</dbReference>
<dbReference type="InterPro" id="IPR012340">
    <property type="entry name" value="NA-bd_OB-fold"/>
</dbReference>
<dbReference type="InterPro" id="IPR003717">
    <property type="entry name" value="RecO"/>
</dbReference>
<dbReference type="InterPro" id="IPR042242">
    <property type="entry name" value="RecO_C"/>
</dbReference>
<dbReference type="NCBIfam" id="TIGR00613">
    <property type="entry name" value="reco"/>
    <property type="match status" value="1"/>
</dbReference>
<dbReference type="PANTHER" id="PTHR33991">
    <property type="entry name" value="DNA REPAIR PROTEIN RECO"/>
    <property type="match status" value="1"/>
</dbReference>
<dbReference type="PANTHER" id="PTHR33991:SF1">
    <property type="entry name" value="DNA REPAIR PROTEIN RECO"/>
    <property type="match status" value="1"/>
</dbReference>
<dbReference type="Pfam" id="PF02565">
    <property type="entry name" value="RecO_C"/>
    <property type="match status" value="1"/>
</dbReference>
<dbReference type="Pfam" id="PF11967">
    <property type="entry name" value="RecO_N"/>
    <property type="match status" value="1"/>
</dbReference>
<dbReference type="SUPFAM" id="SSF57863">
    <property type="entry name" value="ArfGap/RecO-like zinc finger"/>
    <property type="match status" value="1"/>
</dbReference>
<dbReference type="SUPFAM" id="SSF50249">
    <property type="entry name" value="Nucleic acid-binding proteins"/>
    <property type="match status" value="1"/>
</dbReference>